<comment type="function">
    <text evidence="1">Required for insertion of 4Fe-4S clusters for at least IspG.</text>
</comment>
<comment type="cofactor">
    <cofactor evidence="1">
        <name>iron-sulfur cluster</name>
        <dbReference type="ChEBI" id="CHEBI:30408"/>
    </cofactor>
    <text evidence="1">Binds 1 iron-sulfur cluster per subunit.</text>
</comment>
<comment type="subunit">
    <text evidence="1">Homodimer.</text>
</comment>
<comment type="similarity">
    <text evidence="1">Belongs to the HesB/IscA family.</text>
</comment>
<name>ERPA_ECO45</name>
<reference key="1">
    <citation type="journal article" date="2009" name="PLoS Genet.">
        <title>Organised genome dynamics in the Escherichia coli species results in highly diverse adaptive paths.</title>
        <authorList>
            <person name="Touchon M."/>
            <person name="Hoede C."/>
            <person name="Tenaillon O."/>
            <person name="Barbe V."/>
            <person name="Baeriswyl S."/>
            <person name="Bidet P."/>
            <person name="Bingen E."/>
            <person name="Bonacorsi S."/>
            <person name="Bouchier C."/>
            <person name="Bouvet O."/>
            <person name="Calteau A."/>
            <person name="Chiapello H."/>
            <person name="Clermont O."/>
            <person name="Cruveiller S."/>
            <person name="Danchin A."/>
            <person name="Diard M."/>
            <person name="Dossat C."/>
            <person name="Karoui M.E."/>
            <person name="Frapy E."/>
            <person name="Garry L."/>
            <person name="Ghigo J.M."/>
            <person name="Gilles A.M."/>
            <person name="Johnson J."/>
            <person name="Le Bouguenec C."/>
            <person name="Lescat M."/>
            <person name="Mangenot S."/>
            <person name="Martinez-Jehanne V."/>
            <person name="Matic I."/>
            <person name="Nassif X."/>
            <person name="Oztas S."/>
            <person name="Petit M.A."/>
            <person name="Pichon C."/>
            <person name="Rouy Z."/>
            <person name="Ruf C.S."/>
            <person name="Schneider D."/>
            <person name="Tourret J."/>
            <person name="Vacherie B."/>
            <person name="Vallenet D."/>
            <person name="Medigue C."/>
            <person name="Rocha E.P.C."/>
            <person name="Denamur E."/>
        </authorList>
    </citation>
    <scope>NUCLEOTIDE SEQUENCE [LARGE SCALE GENOMIC DNA]</scope>
    <source>
        <strain>S88 / ExPEC</strain>
    </source>
</reference>
<proteinExistence type="inferred from homology"/>
<accession>B7MBD9</accession>
<gene>
    <name evidence="1" type="primary">erpA</name>
    <name type="ordered locus">ECS88_0167</name>
</gene>
<protein>
    <recommendedName>
        <fullName evidence="1">Iron-sulfur cluster insertion protein ErpA</fullName>
    </recommendedName>
</protein>
<organism>
    <name type="scientific">Escherichia coli O45:K1 (strain S88 / ExPEC)</name>
    <dbReference type="NCBI Taxonomy" id="585035"/>
    <lineage>
        <taxon>Bacteria</taxon>
        <taxon>Pseudomonadati</taxon>
        <taxon>Pseudomonadota</taxon>
        <taxon>Gammaproteobacteria</taxon>
        <taxon>Enterobacterales</taxon>
        <taxon>Enterobacteriaceae</taxon>
        <taxon>Escherichia</taxon>
    </lineage>
</organism>
<feature type="chain" id="PRO_1000144907" description="Iron-sulfur cluster insertion protein ErpA">
    <location>
        <begin position="1"/>
        <end position="114"/>
    </location>
</feature>
<feature type="binding site" evidence="1">
    <location>
        <position position="42"/>
    </location>
    <ligand>
        <name>iron-sulfur cluster</name>
        <dbReference type="ChEBI" id="CHEBI:30408"/>
    </ligand>
</feature>
<feature type="binding site" evidence="1">
    <location>
        <position position="106"/>
    </location>
    <ligand>
        <name>iron-sulfur cluster</name>
        <dbReference type="ChEBI" id="CHEBI:30408"/>
    </ligand>
</feature>
<feature type="binding site" evidence="1">
    <location>
        <position position="108"/>
    </location>
    <ligand>
        <name>iron-sulfur cluster</name>
        <dbReference type="ChEBI" id="CHEBI:30408"/>
    </ligand>
</feature>
<evidence type="ECO:0000255" key="1">
    <source>
        <dbReference type="HAMAP-Rule" id="MF_01380"/>
    </source>
</evidence>
<dbReference type="EMBL" id="CU928161">
    <property type="protein sequence ID" value="CAR01532.1"/>
    <property type="molecule type" value="Genomic_DNA"/>
</dbReference>
<dbReference type="RefSeq" id="WP_001295564.1">
    <property type="nucleotide sequence ID" value="NC_011742.1"/>
</dbReference>
<dbReference type="SMR" id="B7MBD9"/>
<dbReference type="GeneID" id="93777270"/>
<dbReference type="KEGG" id="ecz:ECS88_0167"/>
<dbReference type="HOGENOM" id="CLU_069054_5_3_6"/>
<dbReference type="Proteomes" id="UP000000747">
    <property type="component" value="Chromosome"/>
</dbReference>
<dbReference type="GO" id="GO:0005829">
    <property type="term" value="C:cytosol"/>
    <property type="evidence" value="ECO:0007669"/>
    <property type="project" value="TreeGrafter"/>
</dbReference>
<dbReference type="GO" id="GO:0051537">
    <property type="term" value="F:2 iron, 2 sulfur cluster binding"/>
    <property type="evidence" value="ECO:0007669"/>
    <property type="project" value="UniProtKB-ARBA"/>
</dbReference>
<dbReference type="GO" id="GO:0051539">
    <property type="term" value="F:4 iron, 4 sulfur cluster binding"/>
    <property type="evidence" value="ECO:0007669"/>
    <property type="project" value="TreeGrafter"/>
</dbReference>
<dbReference type="GO" id="GO:0005506">
    <property type="term" value="F:iron ion binding"/>
    <property type="evidence" value="ECO:0007669"/>
    <property type="project" value="UniProtKB-UniRule"/>
</dbReference>
<dbReference type="GO" id="GO:0016226">
    <property type="term" value="P:iron-sulfur cluster assembly"/>
    <property type="evidence" value="ECO:0007669"/>
    <property type="project" value="UniProtKB-UniRule"/>
</dbReference>
<dbReference type="FunFam" id="2.60.300.12:FF:000002">
    <property type="entry name" value="Iron-sulfur cluster insertion protein ErpA"/>
    <property type="match status" value="1"/>
</dbReference>
<dbReference type="Gene3D" id="2.60.300.12">
    <property type="entry name" value="HesB-like domain"/>
    <property type="match status" value="1"/>
</dbReference>
<dbReference type="HAMAP" id="MF_01380">
    <property type="entry name" value="Fe_S_insert_ErpA"/>
    <property type="match status" value="1"/>
</dbReference>
<dbReference type="InterPro" id="IPR000361">
    <property type="entry name" value="FeS_biogenesis"/>
</dbReference>
<dbReference type="InterPro" id="IPR016092">
    <property type="entry name" value="FeS_cluster_insertion"/>
</dbReference>
<dbReference type="InterPro" id="IPR017870">
    <property type="entry name" value="FeS_cluster_insertion_CS"/>
</dbReference>
<dbReference type="InterPro" id="IPR023063">
    <property type="entry name" value="FeS_cluster_insertion_RrpA"/>
</dbReference>
<dbReference type="InterPro" id="IPR035903">
    <property type="entry name" value="HesB-like_dom_sf"/>
</dbReference>
<dbReference type="NCBIfam" id="TIGR00049">
    <property type="entry name" value="iron-sulfur cluster assembly accessory protein"/>
    <property type="match status" value="1"/>
</dbReference>
<dbReference type="NCBIfam" id="NF010147">
    <property type="entry name" value="PRK13623.1"/>
    <property type="match status" value="1"/>
</dbReference>
<dbReference type="PANTHER" id="PTHR43011">
    <property type="entry name" value="IRON-SULFUR CLUSTER ASSEMBLY 2 HOMOLOG, MITOCHONDRIAL"/>
    <property type="match status" value="1"/>
</dbReference>
<dbReference type="PANTHER" id="PTHR43011:SF1">
    <property type="entry name" value="IRON-SULFUR CLUSTER ASSEMBLY 2 HOMOLOG, MITOCHONDRIAL"/>
    <property type="match status" value="1"/>
</dbReference>
<dbReference type="Pfam" id="PF01521">
    <property type="entry name" value="Fe-S_biosyn"/>
    <property type="match status" value="1"/>
</dbReference>
<dbReference type="SUPFAM" id="SSF89360">
    <property type="entry name" value="HesB-like domain"/>
    <property type="match status" value="1"/>
</dbReference>
<dbReference type="PROSITE" id="PS01152">
    <property type="entry name" value="HESB"/>
    <property type="match status" value="1"/>
</dbReference>
<sequence length="114" mass="12100">MSDDVALPLEFTDAAANKVKSLIADEDNPNLKLRVYITGGGCSGFQYGFTFDDQVNEGDMTIEKQGVGLVVDPMSLQYLVGGSVDYTEGLEGSRFIVTNPNAKSTCGCGSSFSI</sequence>
<keyword id="KW-0408">Iron</keyword>
<keyword id="KW-0411">Iron-sulfur</keyword>
<keyword id="KW-0479">Metal-binding</keyword>
<keyword id="KW-1185">Reference proteome</keyword>